<comment type="function">
    <text evidence="3 5">Involved in the control of reactive oxygen species levels and the regulation of mitochondrial redox homeostasis (By similarity). Maintains thioredoxin in a reduced state. May play a role in redox-regulated cell signaling.</text>
</comment>
<comment type="catalytic activity">
    <reaction evidence="5">
        <text>[thioredoxin]-dithiol + NADP(+) = [thioredoxin]-disulfide + NADPH + H(+)</text>
        <dbReference type="Rhea" id="RHEA:20345"/>
        <dbReference type="Rhea" id="RHEA-COMP:10698"/>
        <dbReference type="Rhea" id="RHEA-COMP:10700"/>
        <dbReference type="ChEBI" id="CHEBI:15378"/>
        <dbReference type="ChEBI" id="CHEBI:29950"/>
        <dbReference type="ChEBI" id="CHEBI:50058"/>
        <dbReference type="ChEBI" id="CHEBI:57783"/>
        <dbReference type="ChEBI" id="CHEBI:58349"/>
        <dbReference type="EC" id="1.8.1.9"/>
    </reaction>
    <physiologicalReaction direction="left-to-right" evidence="8">
        <dbReference type="Rhea" id="RHEA:20346"/>
    </physiologicalReaction>
</comment>
<comment type="cofactor">
    <cofactor evidence="5">
        <name>FAD</name>
        <dbReference type="ChEBI" id="CHEBI:57692"/>
    </cofactor>
</comment>
<comment type="activity regulation">
    <text evidence="5">Inhibited by 1-chloro-2,4-dinitrobenzene and by zinc, calcium, magnesium and Fe(2+) ions.</text>
</comment>
<comment type="biophysicochemical properties">
    <kinetics>
        <KM evidence="5">2.8 uM for thioredoxin</KM>
        <KM evidence="5">1.4 uM for NADPH</KM>
        <text evidence="5">kcat is 1200 sec(-1) with thioredoxin as substrate.</text>
    </kinetics>
    <phDependence>
        <text evidence="5">Optimum pH is 7.5.</text>
    </phDependence>
</comment>
<comment type="subunit">
    <text evidence="5">Homodimer.</text>
</comment>
<comment type="subcellular location">
    <subcellularLocation>
        <location evidence="5">Mitochondrion</location>
    </subcellularLocation>
</comment>
<comment type="miscellaneous">
    <text evidence="4">The active site is a redox-active disulfide bond. The selenocysteine residue is also essential for catalytic activity (By similarity).</text>
</comment>
<comment type="similarity">
    <text evidence="7">Belongs to the class-I pyridine nucleotide-disulfide oxidoreductase family.</text>
</comment>
<dbReference type="EC" id="1.8.1.9" evidence="5"/>
<dbReference type="EMBL" id="AB022283">
    <property type="protein sequence ID" value="BAA82153.1"/>
    <property type="molecule type" value="mRNA"/>
</dbReference>
<dbReference type="RefSeq" id="NP_777051.1">
    <property type="nucleotide sequence ID" value="NM_174626.3"/>
</dbReference>
<dbReference type="FunCoup" id="Q9N2I8">
    <property type="interactions" value="352"/>
</dbReference>
<dbReference type="STRING" id="9913.ENSBTAP00000053158"/>
<dbReference type="PaxDb" id="9913-ENSBTAP00000053158"/>
<dbReference type="Ensembl" id="ENSBTAT00000060561.4">
    <property type="protein sequence ID" value="ENSBTAP00000053158.3"/>
    <property type="gene ID" value="ENSBTAG00000043581.4"/>
</dbReference>
<dbReference type="GeneID" id="282389"/>
<dbReference type="KEGG" id="bta:282389"/>
<dbReference type="CTD" id="10587"/>
<dbReference type="VEuPathDB" id="HostDB:ENSBTAG00000043581"/>
<dbReference type="VGNC" id="VGNC:36546">
    <property type="gene designation" value="TXNRD2"/>
</dbReference>
<dbReference type="eggNOG" id="KOG4716">
    <property type="taxonomic scope" value="Eukaryota"/>
</dbReference>
<dbReference type="GeneTree" id="ENSGT00940000158832"/>
<dbReference type="InParanoid" id="Q9N2I8"/>
<dbReference type="OMA" id="CFDYVKP"/>
<dbReference type="OrthoDB" id="5956163at2759"/>
<dbReference type="Reactome" id="R-BTA-3299685">
    <property type="pathway name" value="Detoxification of Reactive Oxygen Species"/>
</dbReference>
<dbReference type="Proteomes" id="UP000009136">
    <property type="component" value="Chromosome 17"/>
</dbReference>
<dbReference type="Bgee" id="ENSBTAG00000043581">
    <property type="expression patterns" value="Expressed in laryngeal cartilage and 103 other cell types or tissues"/>
</dbReference>
<dbReference type="GO" id="GO:0005737">
    <property type="term" value="C:cytoplasm"/>
    <property type="evidence" value="ECO:0000318"/>
    <property type="project" value="GO_Central"/>
</dbReference>
<dbReference type="GO" id="GO:0005829">
    <property type="term" value="C:cytosol"/>
    <property type="evidence" value="ECO:0000318"/>
    <property type="project" value="GO_Central"/>
</dbReference>
<dbReference type="GO" id="GO:0005739">
    <property type="term" value="C:mitochondrion"/>
    <property type="evidence" value="ECO:0000314"/>
    <property type="project" value="UniProtKB"/>
</dbReference>
<dbReference type="GO" id="GO:0050660">
    <property type="term" value="F:flavin adenine dinucleotide binding"/>
    <property type="evidence" value="ECO:0007669"/>
    <property type="project" value="InterPro"/>
</dbReference>
<dbReference type="GO" id="GO:0042803">
    <property type="term" value="F:protein homodimerization activity"/>
    <property type="evidence" value="ECO:0000250"/>
    <property type="project" value="UniProtKB"/>
</dbReference>
<dbReference type="GO" id="GO:0004791">
    <property type="term" value="F:thioredoxin-disulfide reductase (NADPH) activity"/>
    <property type="evidence" value="ECO:0000314"/>
    <property type="project" value="UniProtKB"/>
</dbReference>
<dbReference type="GO" id="GO:0045454">
    <property type="term" value="P:cell redox homeostasis"/>
    <property type="evidence" value="ECO:0000250"/>
    <property type="project" value="UniProtKB"/>
</dbReference>
<dbReference type="GO" id="GO:0000305">
    <property type="term" value="P:response to oxygen radical"/>
    <property type="evidence" value="ECO:0000304"/>
    <property type="project" value="UniProtKB"/>
</dbReference>
<dbReference type="FunFam" id="3.50.50.60:FF:000190">
    <property type="entry name" value="Thioredoxin reductase"/>
    <property type="match status" value="1"/>
</dbReference>
<dbReference type="FunFam" id="3.30.390.30:FF:000004">
    <property type="entry name" value="Thioredoxin reductase 1, cytoplasmic"/>
    <property type="match status" value="1"/>
</dbReference>
<dbReference type="Gene3D" id="3.30.390.30">
    <property type="match status" value="1"/>
</dbReference>
<dbReference type="Gene3D" id="3.50.50.60">
    <property type="entry name" value="FAD/NAD(P)-binding domain"/>
    <property type="match status" value="2"/>
</dbReference>
<dbReference type="InterPro" id="IPR036188">
    <property type="entry name" value="FAD/NAD-bd_sf"/>
</dbReference>
<dbReference type="InterPro" id="IPR023753">
    <property type="entry name" value="FAD/NAD-binding_dom"/>
</dbReference>
<dbReference type="InterPro" id="IPR016156">
    <property type="entry name" value="FAD/NAD-linked_Rdtase_dimer_sf"/>
</dbReference>
<dbReference type="InterPro" id="IPR046952">
    <property type="entry name" value="GSHR/TRXR-like"/>
</dbReference>
<dbReference type="InterPro" id="IPR001100">
    <property type="entry name" value="Pyr_nuc-diS_OxRdtase"/>
</dbReference>
<dbReference type="InterPro" id="IPR004099">
    <property type="entry name" value="Pyr_nucl-diS_OxRdtase_dimer"/>
</dbReference>
<dbReference type="InterPro" id="IPR012999">
    <property type="entry name" value="Pyr_OxRdtase_I_AS"/>
</dbReference>
<dbReference type="InterPro" id="IPR006338">
    <property type="entry name" value="Thioredoxin/glutathione_Rdtase"/>
</dbReference>
<dbReference type="NCBIfam" id="TIGR01438">
    <property type="entry name" value="TGR"/>
    <property type="match status" value="1"/>
</dbReference>
<dbReference type="PANTHER" id="PTHR42737">
    <property type="entry name" value="GLUTATHIONE REDUCTASE"/>
    <property type="match status" value="1"/>
</dbReference>
<dbReference type="PANTHER" id="PTHR42737:SF7">
    <property type="entry name" value="THIOREDOXIN-DISULFIDE REDUCTASE"/>
    <property type="match status" value="1"/>
</dbReference>
<dbReference type="Pfam" id="PF07992">
    <property type="entry name" value="Pyr_redox_2"/>
    <property type="match status" value="1"/>
</dbReference>
<dbReference type="Pfam" id="PF02852">
    <property type="entry name" value="Pyr_redox_dim"/>
    <property type="match status" value="1"/>
</dbReference>
<dbReference type="PIRSF" id="PIRSF000350">
    <property type="entry name" value="Mercury_reductase_MerA"/>
    <property type="match status" value="1"/>
</dbReference>
<dbReference type="PRINTS" id="PR00368">
    <property type="entry name" value="FADPNR"/>
</dbReference>
<dbReference type="PRINTS" id="PR00411">
    <property type="entry name" value="PNDRDTASEI"/>
</dbReference>
<dbReference type="SUPFAM" id="SSF51905">
    <property type="entry name" value="FAD/NAD(P)-binding domain"/>
    <property type="match status" value="1"/>
</dbReference>
<dbReference type="SUPFAM" id="SSF55424">
    <property type="entry name" value="FAD/NAD-linked reductases, dimerisation (C-terminal) domain"/>
    <property type="match status" value="1"/>
</dbReference>
<dbReference type="PROSITE" id="PS00076">
    <property type="entry name" value="PYRIDINE_REDOX_1"/>
    <property type="match status" value="1"/>
</dbReference>
<proteinExistence type="evidence at protein level"/>
<protein>
    <recommendedName>
        <fullName evidence="8">Thioredoxin reductase 2, mitochondrial</fullName>
        <shortName evidence="6">mt-TR</shortName>
        <ecNumber evidence="5">1.8.1.9</ecNumber>
    </recommendedName>
    <alternativeName>
        <fullName>Thioredoxin reductase TR3</fullName>
    </alternativeName>
</protein>
<sequence>MAALRGAAARFRGRAPGGARGAAGRQCYDLLVIGGGSGGLACAKEAAQLGKKVAVLDYVEPSPQGTRWGLGGTCVNVGCIPKKLMHQAALLGGMIRDAPHYGWGVAQAPHSWATLADAVQNHVKSLNWGHRIQLQDRKVKYFNVKASFVDTHTVCGVSKGGEETLLSAEHIVIATGGRPRYPTHIEGALEYGITSDDLFWLKESPGKTLVVGASYVALECAGLLTGLGLDTTVMIRSVPLRAFDQQMASLVTEHMAGHGTRILRGCAPEKVEKLPGQQLRVTWVDLTSDRKDAGTFDTVLWAIGRVPETASLNLEKAGVHTNPVTGKILVDAQETTSVPHIYAIGDVAEGRPELTPTAIMAGRLLAQRLSGRTSDLMDYSSVPTTVFTPLEYGCVGLSEEAAVARHGEEHVEVYHAFYKPLEFTVPQRDASQCYIKMVCLREPPQLVLGLHFLGPNAGEVIQGFALGIKCGASYQQLMRTVGIHPTCAEEVAKLRISKRSGLDPTVTGCUG</sequence>
<accession>Q9N2I8</accession>
<keyword id="KW-0903">Direct protein sequencing</keyword>
<keyword id="KW-1015">Disulfide bond</keyword>
<keyword id="KW-0274">FAD</keyword>
<keyword id="KW-0285">Flavoprotein</keyword>
<keyword id="KW-0496">Mitochondrion</keyword>
<keyword id="KW-0521">NADP</keyword>
<keyword id="KW-0560">Oxidoreductase</keyword>
<keyword id="KW-0676">Redox-active center</keyword>
<keyword id="KW-1185">Reference proteome</keyword>
<keyword id="KW-0712">Selenocysteine</keyword>
<keyword id="KW-0809">Transit peptide</keyword>
<gene>
    <name type="primary">TXNRD2</name>
    <name type="synonym">TRXR2</name>
</gene>
<organism evidence="9">
    <name type="scientific">Bos taurus</name>
    <name type="common">Bovine</name>
    <dbReference type="NCBI Taxonomy" id="9913"/>
    <lineage>
        <taxon>Eukaryota</taxon>
        <taxon>Metazoa</taxon>
        <taxon>Chordata</taxon>
        <taxon>Craniata</taxon>
        <taxon>Vertebrata</taxon>
        <taxon>Euteleostomi</taxon>
        <taxon>Mammalia</taxon>
        <taxon>Eutheria</taxon>
        <taxon>Laurasiatheria</taxon>
        <taxon>Artiodactyla</taxon>
        <taxon>Ruminantia</taxon>
        <taxon>Pecora</taxon>
        <taxon>Bovidae</taxon>
        <taxon>Bovinae</taxon>
        <taxon>Bos</taxon>
    </lineage>
</organism>
<evidence type="ECO:0000250" key="1"/>
<evidence type="ECO:0000250" key="2">
    <source>
        <dbReference type="UniProtKB" id="Q9JLT4"/>
    </source>
</evidence>
<evidence type="ECO:0000250" key="3">
    <source>
        <dbReference type="UniProtKB" id="Q9NNW7"/>
    </source>
</evidence>
<evidence type="ECO:0000250" key="4">
    <source>
        <dbReference type="UniProtKB" id="Q9Z0J5"/>
    </source>
</evidence>
<evidence type="ECO:0000269" key="5">
    <source>
    </source>
</evidence>
<evidence type="ECO:0000303" key="6">
    <source>
    </source>
</evidence>
<evidence type="ECO:0000305" key="7"/>
<evidence type="ECO:0000305" key="8">
    <source>
    </source>
</evidence>
<evidence type="ECO:0000312" key="9">
    <source>
        <dbReference type="EMBL" id="BAA82153.1"/>
    </source>
</evidence>
<name>TRXR2_BOVIN</name>
<reference evidence="7" key="1">
    <citation type="journal article" date="1999" name="Eur. J. Biochem.">
        <title>Mitochondrial thioredoxin reductase in bovine adrenal cortex. Its purification, properties, nucleotide/amino acid sequences, and identification of selenocysteine.</title>
        <authorList>
            <person name="Watabe S."/>
            <person name="Makino Y."/>
            <person name="Ogawa K."/>
            <person name="Hiroi T."/>
            <person name="Yamamoto Y."/>
            <person name="Takahashi S.Y."/>
        </authorList>
    </citation>
    <scope>NUCLEOTIDE SEQUENCE [MRNA]</scope>
    <scope>PROTEIN SEQUENCE OF 22-35; 53-82; 160-181; 208-238; 292-316; 328-340; 420-436; 470-488 AND 499-510</scope>
    <scope>SELENOCYSTEINE AT SEC-510</scope>
    <scope>FUNCTION</scope>
    <scope>SUBCELLULAR LOCATION</scope>
    <scope>CATALYTIC ACTIVITY</scope>
    <scope>ACTIVITY REGULATION</scope>
    <scope>BIOPHYSICOCHEMICAL PROPERTIES</scope>
    <source>
        <tissue>Adrenal cortex</tissue>
    </source>
</reference>
<feature type="transit peptide" description="Mitochondrion" evidence="5">
    <location>
        <begin position="1"/>
        <end position="21"/>
    </location>
</feature>
<feature type="chain" id="PRO_0000030287" description="Thioredoxin reductase 2, mitochondrial">
    <location>
        <begin position="22"/>
        <end position="511"/>
    </location>
</feature>
<feature type="active site" description="Proton acceptor" evidence="1">
    <location>
        <position position="484"/>
    </location>
</feature>
<feature type="binding site" evidence="1">
    <location>
        <begin position="29"/>
        <end position="58"/>
    </location>
    <ligand>
        <name>FAD</name>
        <dbReference type="ChEBI" id="CHEBI:57692"/>
    </ligand>
</feature>
<feature type="non-standard amino acid" description="Selenocysteine" evidence="5">
    <location>
        <position position="510"/>
    </location>
</feature>
<feature type="modified residue" description="N6-succinyllysine" evidence="2">
    <location>
        <position position="316"/>
    </location>
</feature>
<feature type="disulfide bond" description="Redox-active" evidence="1">
    <location>
        <begin position="74"/>
        <end position="79"/>
    </location>
</feature>
<feature type="cross-link" description="Cysteinyl-selenocysteine (Cys-Sec)" evidence="1">
    <location>
        <begin position="509"/>
        <end position="510"/>
    </location>
</feature>